<organism>
    <name type="scientific">Foxtail mosaic virus</name>
    <dbReference type="NCBI Taxonomy" id="12179"/>
    <lineage>
        <taxon>Viruses</taxon>
        <taxon>Riboviria</taxon>
        <taxon>Orthornavirae</taxon>
        <taxon>Kitrinoviricota</taxon>
        <taxon>Alsuviricetes</taxon>
        <taxon>Tymovirales</taxon>
        <taxon>Alphaflexiviridae</taxon>
        <taxon>Potexvirus</taxon>
    </lineage>
</organism>
<protein>
    <recommendedName>
        <fullName>RNA replication protein</fullName>
    </recommendedName>
    <alternativeName>
        <fullName>152 kDa protein</fullName>
    </alternativeName>
    <alternativeName>
        <fullName>ORF1 protein</fullName>
    </alternativeName>
    <domain>
        <recommendedName>
            <fullName>RNA-directed RNA polymerase</fullName>
            <ecNumber>2.7.7.48</ecNumber>
        </recommendedName>
    </domain>
    <domain>
        <recommendedName>
            <fullName>Helicase</fullName>
            <ecNumber>3.6.4.13</ecNumber>
        </recommendedName>
    </domain>
</protein>
<sequence length="1335" mass="152318">MSIEAVFDQVTDPSLRAVIQEEAHKQIKDLFKETTRCNPYSIPQAGRKVLEKYAIPYNPYSLKLHPHAASKAFEVSLYEAASNYLPSTSSTPVTFMFTKPGKLRFFRRRGHVDKFVNADIVPRDLARYPRDTVYSYLPEITTTHAFIGDTLHHFGEDFLVEVFSRSPKLEVLLATMVLPPEAFYRMESLHPSVYTLLYRDDRFLYLPGGLSGGEYEHRYKDLNWLTFGTVTHGGITITGERIETKAANHLFLFRRGRLATPKFRSFDMPEPMVLLPKVFRPAKYNVQKPIPREKANKWLMYVKSIGNATIRDVWAKLRQTIANADIGLFSPTELVHLTNYFLLLGRLDSHNSFDQVLADSVLKAWFRPMVAKLQEIKHKLMGQTQFMQLCQALEMTEVDLVFEVRDSKTPHKQAVPLDREIENVLLEGVSSEPTYTETEGVADGPLPPPMQTAAEPSATSDEPESSSSREIEHQPAPEITLDEEEPQRDDLPWDAWRTQLRALGFEASERQYDPDGELISPILSTRRLPKTPIDTTLYATLDKIARCPTFYKPDTDRAQTYARDVMAGKTGAILKQQPFEWKTTLKRKTKEEPKEIHLAVLHGAGGSGKSYALQEFMRNNSDTPITVILPTNELRADWKKKLPAHDKDTFMTYENALLCPRGDIFIMDDYTKLPRGYIEAFVQNAPALSLLILTGDPNQAEHFETTEDNEINSLAPASVVFGKFSRYHINATHRNPRNLANALGVYSETPGEVKVLYTRNIKTGYHNLVPSQMKMRNYASLGQRASTYAGCQGITAPRVQIILDSDTPRCTRQVMYTALSRATTEVVLCNTMPDEKSFFQKVEATPYLKAILNLNKEIKVTEGDLTEEPPREPAPPTTHLPVENRIILNEALVEPLPDKHDREIYSNSTGFSNCIQTQDPYIQAFQHQQAKDETLFWATVEKRLAASTPKDNWTEFKTKRPLGDVLWLAYKRAMVLPDEPIKFNPELWWACADEVQKTYLSKPIHALKNGILRQSPDFDWNKLQIFLKSQWVKKIDKIGKIDVNAGQTIAAFYQPTVMLFGTMARYMRRIRDTYQPGEILINCEKNQKHISKWVESNWNHRLPAYTNDFTAYDQSQDGAMLQFEVLKALHHDIPHEVVEAYVALKLNSKMFLGTLAIMRLTGEGPTFDANTECNIAYTHARFEIPKNVAQMYAGDDCALNCRPVERQSFLPLVEKFTLKSKPKVFEQKVGSWPEFCGNLITPRGYLKDPMKLQHCLQLAQRKKPSEPGSLKDVAENYAMDLLPTYELGDALYEIFDERQMNAHYQSVRTLITCAHTKVLRVAQALQEDCTFFSSI</sequence>
<dbReference type="EC" id="2.7.7.48"/>
<dbReference type="EC" id="3.6.4.13"/>
<dbReference type="EMBL" id="M62730">
    <property type="protein sequence ID" value="AAA43826.1"/>
    <property type="molecule type" value="Genomic_RNA"/>
</dbReference>
<dbReference type="PIR" id="JQ1258">
    <property type="entry name" value="JQ1258"/>
</dbReference>
<dbReference type="RefSeq" id="NP_040988.1">
    <property type="nucleotide sequence ID" value="NC_001483.1"/>
</dbReference>
<dbReference type="SMR" id="P22168"/>
<dbReference type="GeneID" id="1494009"/>
<dbReference type="KEGG" id="vg:1494009"/>
<dbReference type="Proteomes" id="UP000008623">
    <property type="component" value="Genome"/>
</dbReference>
<dbReference type="GO" id="GO:0005524">
    <property type="term" value="F:ATP binding"/>
    <property type="evidence" value="ECO:0007669"/>
    <property type="project" value="UniProtKB-KW"/>
</dbReference>
<dbReference type="GO" id="GO:0016887">
    <property type="term" value="F:ATP hydrolysis activity"/>
    <property type="evidence" value="ECO:0007669"/>
    <property type="project" value="RHEA"/>
</dbReference>
<dbReference type="GO" id="GO:0008174">
    <property type="term" value="F:mRNA methyltransferase activity"/>
    <property type="evidence" value="ECO:0007669"/>
    <property type="project" value="InterPro"/>
</dbReference>
<dbReference type="GO" id="GO:0003723">
    <property type="term" value="F:RNA binding"/>
    <property type="evidence" value="ECO:0007669"/>
    <property type="project" value="InterPro"/>
</dbReference>
<dbReference type="GO" id="GO:0003724">
    <property type="term" value="F:RNA helicase activity"/>
    <property type="evidence" value="ECO:0007669"/>
    <property type="project" value="UniProtKB-EC"/>
</dbReference>
<dbReference type="GO" id="GO:0003968">
    <property type="term" value="F:RNA-directed RNA polymerase activity"/>
    <property type="evidence" value="ECO:0007669"/>
    <property type="project" value="UniProtKB-KW"/>
</dbReference>
<dbReference type="GO" id="GO:0006351">
    <property type="term" value="P:DNA-templated transcription"/>
    <property type="evidence" value="ECO:0007669"/>
    <property type="project" value="InterPro"/>
</dbReference>
<dbReference type="GO" id="GO:0016556">
    <property type="term" value="P:mRNA modification"/>
    <property type="evidence" value="ECO:0007669"/>
    <property type="project" value="InterPro"/>
</dbReference>
<dbReference type="GO" id="GO:0006396">
    <property type="term" value="P:RNA processing"/>
    <property type="evidence" value="ECO:0007669"/>
    <property type="project" value="InterPro"/>
</dbReference>
<dbReference type="GO" id="GO:0039694">
    <property type="term" value="P:viral RNA genome replication"/>
    <property type="evidence" value="ECO:0007669"/>
    <property type="project" value="InterPro"/>
</dbReference>
<dbReference type="CDD" id="cd23246">
    <property type="entry name" value="Alphaflexiviridae_RdRp"/>
    <property type="match status" value="1"/>
</dbReference>
<dbReference type="CDD" id="cd18809">
    <property type="entry name" value="SF1_C_RecD"/>
    <property type="match status" value="1"/>
</dbReference>
<dbReference type="FunFam" id="3.40.50.300:FF:001668">
    <property type="entry name" value="Non-structural polyprotein pORF1"/>
    <property type="match status" value="1"/>
</dbReference>
<dbReference type="Gene3D" id="3.40.50.300">
    <property type="entry name" value="P-loop containing nucleotide triphosphate hydrolases"/>
    <property type="match status" value="1"/>
</dbReference>
<dbReference type="InterPro" id="IPR027351">
    <property type="entry name" value="(+)RNA_virus_helicase_core_dom"/>
</dbReference>
<dbReference type="InterPro" id="IPR002588">
    <property type="entry name" value="Alphavirus-like_MT_dom"/>
</dbReference>
<dbReference type="InterPro" id="IPR043502">
    <property type="entry name" value="DNA/RNA_pol_sf"/>
</dbReference>
<dbReference type="InterPro" id="IPR027417">
    <property type="entry name" value="P-loop_NTPase"/>
</dbReference>
<dbReference type="InterPro" id="IPR001788">
    <property type="entry name" value="RNA-dep_RNA_pol_alsuvir"/>
</dbReference>
<dbReference type="InterPro" id="IPR007094">
    <property type="entry name" value="RNA-dir_pol_PSvirus"/>
</dbReference>
<dbReference type="Pfam" id="PF00978">
    <property type="entry name" value="RdRP_2"/>
    <property type="match status" value="1"/>
</dbReference>
<dbReference type="Pfam" id="PF01443">
    <property type="entry name" value="Viral_helicase1"/>
    <property type="match status" value="1"/>
</dbReference>
<dbReference type="Pfam" id="PF01660">
    <property type="entry name" value="Vmethyltransf"/>
    <property type="match status" value="1"/>
</dbReference>
<dbReference type="SUPFAM" id="SSF56672">
    <property type="entry name" value="DNA/RNA polymerases"/>
    <property type="match status" value="1"/>
</dbReference>
<dbReference type="SUPFAM" id="SSF52540">
    <property type="entry name" value="P-loop containing nucleoside triphosphate hydrolases"/>
    <property type="match status" value="2"/>
</dbReference>
<dbReference type="PROSITE" id="PS51743">
    <property type="entry name" value="ALPHAVIRUS_MT"/>
    <property type="match status" value="1"/>
</dbReference>
<dbReference type="PROSITE" id="PS51657">
    <property type="entry name" value="PSRV_HELICASE"/>
    <property type="match status" value="1"/>
</dbReference>
<dbReference type="PROSITE" id="PS50507">
    <property type="entry name" value="RDRP_SSRNA_POS"/>
    <property type="match status" value="1"/>
</dbReference>
<reference key="1">
    <citation type="journal article" date="1991" name="J. Gen. Virol.">
        <title>The entire nucleotide sequence of foxtail mosaic virus RNA.</title>
        <authorList>
            <person name="Bancroft J.B."/>
            <person name="Rouleau M."/>
            <person name="Johnston R."/>
            <person name="Prins L."/>
            <person name="Mackie G.A."/>
        </authorList>
    </citation>
    <scope>NUCLEOTIDE SEQUENCE [GENOMIC RNA]</scope>
</reference>
<evidence type="ECO:0000255" key="1"/>
<evidence type="ECO:0000255" key="2">
    <source>
        <dbReference type="PROSITE-ProRule" id="PRU00539"/>
    </source>
</evidence>
<evidence type="ECO:0000255" key="3">
    <source>
        <dbReference type="PROSITE-ProRule" id="PRU01079"/>
    </source>
</evidence>
<evidence type="ECO:0000256" key="4">
    <source>
        <dbReference type="SAM" id="MobiDB-lite"/>
    </source>
</evidence>
<evidence type="ECO:0000305" key="5"/>
<accession>P22168</accession>
<name>RDRP_FXMV</name>
<comment type="function">
    <text evidence="5">RNA replication. The central part of this protein possibly functions as an ATP-binding helicase (Probable).</text>
</comment>
<comment type="catalytic activity">
    <reaction evidence="2">
        <text>RNA(n) + a ribonucleoside 5'-triphosphate = RNA(n+1) + diphosphate</text>
        <dbReference type="Rhea" id="RHEA:21248"/>
        <dbReference type="Rhea" id="RHEA-COMP:14527"/>
        <dbReference type="Rhea" id="RHEA-COMP:17342"/>
        <dbReference type="ChEBI" id="CHEBI:33019"/>
        <dbReference type="ChEBI" id="CHEBI:61557"/>
        <dbReference type="ChEBI" id="CHEBI:140395"/>
        <dbReference type="EC" id="2.7.7.48"/>
    </reaction>
</comment>
<comment type="catalytic activity">
    <reaction>
        <text>ATP + H2O = ADP + phosphate + H(+)</text>
        <dbReference type="Rhea" id="RHEA:13065"/>
        <dbReference type="ChEBI" id="CHEBI:15377"/>
        <dbReference type="ChEBI" id="CHEBI:15378"/>
        <dbReference type="ChEBI" id="CHEBI:30616"/>
        <dbReference type="ChEBI" id="CHEBI:43474"/>
        <dbReference type="ChEBI" id="CHEBI:456216"/>
        <dbReference type="EC" id="3.6.4.13"/>
    </reaction>
</comment>
<comment type="similarity">
    <text evidence="5">Belongs to the potexviruses/carlaviruses RNA replication protein family.</text>
</comment>
<organismHost>
    <name type="scientific">Setaria italica</name>
    <name type="common">Foxtail millet</name>
    <name type="synonym">Panicum italicum</name>
    <dbReference type="NCBI Taxonomy" id="4555"/>
</organismHost>
<organismHost>
    <name type="scientific">Setaria viridis</name>
    <name type="common">Green bristlegrass</name>
    <name type="synonym">Setaria italica subsp. viridis</name>
    <dbReference type="NCBI Taxonomy" id="4556"/>
</organismHost>
<proteinExistence type="inferred from homology"/>
<keyword id="KW-0067">ATP-binding</keyword>
<keyword id="KW-0347">Helicase</keyword>
<keyword id="KW-0378">Hydrolase</keyword>
<keyword id="KW-0511">Multifunctional enzyme</keyword>
<keyword id="KW-0547">Nucleotide-binding</keyword>
<keyword id="KW-0548">Nucleotidyltransferase</keyword>
<keyword id="KW-1185">Reference proteome</keyword>
<keyword id="KW-0696">RNA-directed RNA polymerase</keyword>
<keyword id="KW-0808">Transferase</keyword>
<keyword id="KW-0693">Viral RNA replication</keyword>
<feature type="chain" id="PRO_0000222548" description="RNA replication protein">
    <location>
        <begin position="1"/>
        <end position="1335"/>
    </location>
</feature>
<feature type="domain" description="Alphavirus-like MT" evidence="3">
    <location>
        <begin position="58"/>
        <end position="225"/>
    </location>
</feature>
<feature type="domain" description="(+)RNA virus helicase ATP-binding">
    <location>
        <begin position="564"/>
        <end position="729"/>
    </location>
</feature>
<feature type="domain" description="(+)RNA virus helicase C-terminal">
    <location>
        <begin position="730"/>
        <end position="863"/>
    </location>
</feature>
<feature type="domain" description="RdRp catalytic" evidence="2">
    <location>
        <begin position="1102"/>
        <end position="1209"/>
    </location>
</feature>
<feature type="region of interest" description="Disordered" evidence="4">
    <location>
        <begin position="428"/>
        <end position="492"/>
    </location>
</feature>
<feature type="compositionally biased region" description="Low complexity" evidence="4">
    <location>
        <begin position="453"/>
        <end position="466"/>
    </location>
</feature>
<feature type="binding site" evidence="1">
    <location>
        <begin position="603"/>
        <end position="610"/>
    </location>
    <ligand>
        <name>ATP</name>
        <dbReference type="ChEBI" id="CHEBI:30616"/>
    </ligand>
</feature>